<proteinExistence type="inferred from homology"/>
<accession>B4QBN2</accession>
<keyword id="KW-1003">Cell membrane</keyword>
<keyword id="KW-0325">Glycoprotein</keyword>
<keyword id="KW-0472">Membrane</keyword>
<keyword id="KW-0597">Phosphoprotein</keyword>
<keyword id="KW-1185">Reference proteome</keyword>
<keyword id="KW-0762">Sugar transport</keyword>
<keyword id="KW-0812">Transmembrane</keyword>
<keyword id="KW-1133">Transmembrane helix</keyword>
<keyword id="KW-0813">Transport</keyword>
<feature type="chain" id="PRO_0000395533" description="Facilitated trehalose transporter Tret1-1">
    <location>
        <begin position="1"/>
        <end position="857"/>
    </location>
</feature>
<feature type="topological domain" description="Cytoplasmic" evidence="2">
    <location>
        <begin position="1"/>
        <end position="392"/>
    </location>
</feature>
<feature type="transmembrane region" description="Helical; Name=1" evidence="2">
    <location>
        <begin position="393"/>
        <end position="413"/>
    </location>
</feature>
<feature type="topological domain" description="Extracellular" evidence="2">
    <location>
        <begin position="414"/>
        <end position="440"/>
    </location>
</feature>
<feature type="transmembrane region" description="Helical; Name=2" evidence="2">
    <location>
        <begin position="441"/>
        <end position="461"/>
    </location>
</feature>
<feature type="topological domain" description="Cytoplasmic" evidence="2">
    <location>
        <begin position="462"/>
        <end position="473"/>
    </location>
</feature>
<feature type="transmembrane region" description="Helical; Name=3" evidence="2">
    <location>
        <begin position="474"/>
        <end position="494"/>
    </location>
</feature>
<feature type="topological domain" description="Extracellular" evidence="2">
    <location>
        <begin position="495"/>
        <end position="497"/>
    </location>
</feature>
<feature type="transmembrane region" description="Helical; Name=4" evidence="2">
    <location>
        <begin position="498"/>
        <end position="518"/>
    </location>
</feature>
<feature type="topological domain" description="Cytoplasmic" evidence="2">
    <location>
        <begin position="519"/>
        <end position="528"/>
    </location>
</feature>
<feature type="transmembrane region" description="Helical; Name=5" evidence="2">
    <location>
        <begin position="529"/>
        <end position="549"/>
    </location>
</feature>
<feature type="topological domain" description="Extracellular" evidence="2">
    <location>
        <begin position="550"/>
        <end position="552"/>
    </location>
</feature>
<feature type="transmembrane region" description="Helical; Name=6" evidence="2">
    <location>
        <begin position="553"/>
        <end position="573"/>
    </location>
</feature>
<feature type="topological domain" description="Cytoplasmic" evidence="2">
    <location>
        <begin position="574"/>
        <end position="636"/>
    </location>
</feature>
<feature type="transmembrane region" description="Helical; Name=7" evidence="2">
    <location>
        <begin position="637"/>
        <end position="657"/>
    </location>
</feature>
<feature type="topological domain" description="Extracellular" evidence="2">
    <location>
        <begin position="658"/>
        <end position="673"/>
    </location>
</feature>
<feature type="transmembrane region" description="Helical; Name=8" evidence="2">
    <location>
        <begin position="674"/>
        <end position="694"/>
    </location>
</feature>
<feature type="topological domain" description="Cytoplasmic" evidence="2">
    <location>
        <begin position="695"/>
        <end position="700"/>
    </location>
</feature>
<feature type="transmembrane region" description="Helical; Name=9" evidence="2">
    <location>
        <begin position="701"/>
        <end position="721"/>
    </location>
</feature>
<feature type="topological domain" description="Extracellular" evidence="2">
    <location>
        <begin position="722"/>
        <end position="740"/>
    </location>
</feature>
<feature type="transmembrane region" description="Helical; Name=10" evidence="2">
    <location>
        <begin position="741"/>
        <end position="761"/>
    </location>
</feature>
<feature type="topological domain" description="Cytoplasmic" evidence="2">
    <location>
        <begin position="762"/>
        <end position="770"/>
    </location>
</feature>
<feature type="transmembrane region" description="Helical; Name=11" evidence="2">
    <location>
        <begin position="771"/>
        <end position="791"/>
    </location>
</feature>
<feature type="topological domain" description="Extracellular" evidence="2">
    <location>
        <begin position="792"/>
        <end position="801"/>
    </location>
</feature>
<feature type="transmembrane region" description="Helical; Name=12" evidence="2">
    <location>
        <begin position="802"/>
        <end position="822"/>
    </location>
</feature>
<feature type="topological domain" description="Cytoplasmic" evidence="2">
    <location>
        <begin position="823"/>
        <end position="857"/>
    </location>
</feature>
<feature type="region of interest" description="Disordered" evidence="3">
    <location>
        <begin position="1"/>
        <end position="28"/>
    </location>
</feature>
<feature type="region of interest" description="Disordered" evidence="3">
    <location>
        <begin position="62"/>
        <end position="203"/>
    </location>
</feature>
<feature type="region of interest" description="Disordered" evidence="3">
    <location>
        <begin position="327"/>
        <end position="346"/>
    </location>
</feature>
<feature type="compositionally biased region" description="Polar residues" evidence="3">
    <location>
        <begin position="69"/>
        <end position="81"/>
    </location>
</feature>
<feature type="compositionally biased region" description="Basic and acidic residues" evidence="3">
    <location>
        <begin position="134"/>
        <end position="143"/>
    </location>
</feature>
<feature type="compositionally biased region" description="Polar residues" evidence="3">
    <location>
        <begin position="171"/>
        <end position="181"/>
    </location>
</feature>
<feature type="compositionally biased region" description="Polar residues" evidence="3">
    <location>
        <begin position="330"/>
        <end position="341"/>
    </location>
</feature>
<feature type="modified residue" description="Phosphoserine" evidence="1">
    <location>
        <position position="248"/>
    </location>
</feature>
<feature type="modified residue" description="Phosphoserine" evidence="1">
    <location>
        <position position="249"/>
    </location>
</feature>
<feature type="modified residue" description="Phosphoserine" evidence="1">
    <location>
        <position position="250"/>
    </location>
</feature>
<feature type="modified residue" description="Phosphoserine" evidence="1">
    <location>
        <position position="320"/>
    </location>
</feature>
<feature type="modified residue" description="Phosphoserine" evidence="1">
    <location>
        <position position="322"/>
    </location>
</feature>
<feature type="modified residue" description="Phosphoserine" evidence="1">
    <location>
        <position position="845"/>
    </location>
</feature>
<feature type="modified residue" description="Phosphoserine" evidence="1">
    <location>
        <position position="846"/>
    </location>
</feature>
<feature type="glycosylation site" description="N-linked (GlcNAc...) asparagine" evidence="2">
    <location>
        <position position="428"/>
    </location>
</feature>
<feature type="glycosylation site" description="N-linked (GlcNAc...) asparagine" evidence="2">
    <location>
        <position position="550"/>
    </location>
</feature>
<name>TRE11_DROSI</name>
<comment type="function">
    <text evidence="1">Low-capacity facilitative transporter for trehalose. Does not transport maltose, sucrose or lactose. Mediates the bidirectional transfer of trehalose. Responsible for the transport of trehalose synthesized in the fat body and the incorporation of trehalose into other tissues that require a carbon source, thereby regulating trehalose levels in the hemolymph (By similarity).</text>
</comment>
<comment type="subcellular location">
    <subcellularLocation>
        <location evidence="1">Cell membrane</location>
        <topology evidence="1">Multi-pass membrane protein</topology>
    </subcellularLocation>
</comment>
<comment type="similarity">
    <text evidence="1 2">Belongs to the major facilitator superfamily. Sugar transporter (TC 2.A.1.1) family. Trehalose transporter subfamily.</text>
</comment>
<comment type="sequence caution" evidence="4">
    <conflict type="erroneous gene model prediction">
        <sequence resource="EMBL-CDS" id="EDX06649"/>
    </conflict>
</comment>
<dbReference type="EMBL" id="CM000362">
    <property type="protein sequence ID" value="EDX06649.1"/>
    <property type="status" value="ALT_SEQ"/>
    <property type="molecule type" value="Genomic_DNA"/>
</dbReference>
<dbReference type="EMBL" id="AAGH01010232">
    <property type="status" value="NOT_ANNOTATED_CDS"/>
    <property type="molecule type" value="Genomic_DNA"/>
</dbReference>
<dbReference type="SMR" id="B4QBN2"/>
<dbReference type="STRING" id="7240.B4QBN2"/>
<dbReference type="GlyCosmos" id="B4QBN2">
    <property type="glycosylation" value="2 sites, No reported glycans"/>
</dbReference>
<dbReference type="OrthoDB" id="6339427at2759"/>
<dbReference type="ChiTaRS" id="Tret1-1">
    <property type="organism name" value="fly"/>
</dbReference>
<dbReference type="Proteomes" id="UP000000304">
    <property type="component" value="Chromosome 2R"/>
</dbReference>
<dbReference type="GO" id="GO:0005886">
    <property type="term" value="C:plasma membrane"/>
    <property type="evidence" value="ECO:0000250"/>
    <property type="project" value="UniProtKB"/>
</dbReference>
<dbReference type="GO" id="GO:0055056">
    <property type="term" value="F:D-glucose transmembrane transporter activity"/>
    <property type="evidence" value="ECO:0007669"/>
    <property type="project" value="EnsemblMetazoa"/>
</dbReference>
<dbReference type="GO" id="GO:0015574">
    <property type="term" value="F:trehalose transmembrane transporter activity"/>
    <property type="evidence" value="ECO:0000250"/>
    <property type="project" value="UniProtKB"/>
</dbReference>
<dbReference type="GO" id="GO:1904659">
    <property type="term" value="P:D-glucose transmembrane transport"/>
    <property type="evidence" value="ECO:0007669"/>
    <property type="project" value="EnsemblMetazoa"/>
</dbReference>
<dbReference type="GO" id="GO:0015771">
    <property type="term" value="P:trehalose transport"/>
    <property type="evidence" value="ECO:0000250"/>
    <property type="project" value="UniProtKB"/>
</dbReference>
<dbReference type="CDD" id="cd17358">
    <property type="entry name" value="MFS_GLUT6_8_Class3_like"/>
    <property type="match status" value="1"/>
</dbReference>
<dbReference type="FunFam" id="1.20.1250.20:FF:000055">
    <property type="entry name" value="Facilitated trehalose transporter Tret1-2 homolog"/>
    <property type="match status" value="1"/>
</dbReference>
<dbReference type="Gene3D" id="1.20.1250.20">
    <property type="entry name" value="MFS general substrate transporter like domains"/>
    <property type="match status" value="1"/>
</dbReference>
<dbReference type="InterPro" id="IPR020846">
    <property type="entry name" value="MFS_dom"/>
</dbReference>
<dbReference type="InterPro" id="IPR044775">
    <property type="entry name" value="MFS_ERD6/Tret1-like"/>
</dbReference>
<dbReference type="InterPro" id="IPR005828">
    <property type="entry name" value="MFS_sugar_transport-like"/>
</dbReference>
<dbReference type="InterPro" id="IPR036259">
    <property type="entry name" value="MFS_trans_sf"/>
</dbReference>
<dbReference type="InterPro" id="IPR050549">
    <property type="entry name" value="MFS_Trehalose_Transporter"/>
</dbReference>
<dbReference type="InterPro" id="IPR003663">
    <property type="entry name" value="Sugar/inositol_transpt"/>
</dbReference>
<dbReference type="InterPro" id="IPR005829">
    <property type="entry name" value="Sugar_transporter_CS"/>
</dbReference>
<dbReference type="NCBIfam" id="TIGR00879">
    <property type="entry name" value="SP"/>
    <property type="match status" value="1"/>
</dbReference>
<dbReference type="PANTHER" id="PTHR48021">
    <property type="match status" value="1"/>
</dbReference>
<dbReference type="PANTHER" id="PTHR48021:SF96">
    <property type="entry name" value="FACILITATED TREHALOSE TRANSPORTER TRET1-1-RELATED"/>
    <property type="match status" value="1"/>
</dbReference>
<dbReference type="Pfam" id="PF00083">
    <property type="entry name" value="Sugar_tr"/>
    <property type="match status" value="1"/>
</dbReference>
<dbReference type="PRINTS" id="PR00171">
    <property type="entry name" value="SUGRTRNSPORT"/>
</dbReference>
<dbReference type="SUPFAM" id="SSF103473">
    <property type="entry name" value="MFS general substrate transporter"/>
    <property type="match status" value="1"/>
</dbReference>
<dbReference type="PROSITE" id="PS50850">
    <property type="entry name" value="MFS"/>
    <property type="match status" value="1"/>
</dbReference>
<dbReference type="PROSITE" id="PS00216">
    <property type="entry name" value="SUGAR_TRANSPORT_1"/>
    <property type="match status" value="2"/>
</dbReference>
<dbReference type="PROSITE" id="PS00217">
    <property type="entry name" value="SUGAR_TRANSPORT_2"/>
    <property type="match status" value="1"/>
</dbReference>
<evidence type="ECO:0000250" key="1">
    <source>
        <dbReference type="UniProtKB" id="A1Z8N1"/>
    </source>
</evidence>
<evidence type="ECO:0000255" key="2"/>
<evidence type="ECO:0000256" key="3">
    <source>
        <dbReference type="SAM" id="MobiDB-lite"/>
    </source>
</evidence>
<evidence type="ECO:0000305" key="4"/>
<evidence type="ECO:0000312" key="5">
    <source>
        <dbReference type="EMBL" id="EDX06649.1"/>
    </source>
</evidence>
<protein>
    <recommendedName>
        <fullName evidence="1">Facilitated trehalose transporter Tret1-1</fullName>
    </recommendedName>
</protein>
<gene>
    <name evidence="1" type="primary">Tret1-1</name>
    <name type="ORF">GD10807</name>
</gene>
<reference evidence="5" key="1">
    <citation type="journal article" date="2007" name="Nature">
        <title>Evolution of genes and genomes on the Drosophila phylogeny.</title>
        <authorList>
            <consortium name="Drosophila 12 genomes consortium"/>
        </authorList>
    </citation>
    <scope>NUCLEOTIDE SEQUENCE [LARGE SCALE GENOMIC DNA]</scope>
</reference>
<sequence>MSGRDSRGAGGGGGGHQPLSNAMGKLKEKLTRVGDELGYHRVESNLSTSNTATSLDTILPEDPFLFPQVSPQRHPQNTVRTQRLLEDEPPLSFRPLLEDDDINEPPTQQQQRTPLRASGSLELTPLPPPPTSLEIREHRDRQQRGAQGDDLQRSKQSLKGSRVSFERRDTGNSNTNSNKAAESSDEDSFEEKRTGFQQQKATSVDHKGILKDLKHILANDNRRQFQAKKHVSLDVKGTRFLQDLLKESSSEEEFHKTRREFQGRKHQSLDPRVTFKLDKVLQGSSTDSDEEGEDAEHKRLIHRPKDITKPVIIDLKDLESESDEDFLTSRQHFQQQRSISTDSRKSRRLYEMDEMGNKRGENIRHAVPFVRQITEDGKPKLEVYRPTTNPIYIWTQVLAALSVSLGSLVVGFVSAYTSPALVSMTDRNITSFEVTQDAGSWVGGIMPLAGLAGGIAGGPLIEYLGRRNTILATAVPFIVSSLLIACAVNVAMVLCGRFLAGFCVGIASLSLPVYLGETVQPEVRGTLGLLPTAFGNIGILLCFVAGSFMNWSMLAFLGAALPVPFLILMFLIPETPRWFVGRGLEERARKALKWLRGKEADVEPELKGLMRSQADADRQASRNTMLELFKRINLKPLSISLGLMFFQQFSGINAVIFYTVQIFKDAGSTIDSNLCTIIVGIVNFFATFMGILLIDRLGRKILLYISDIAMILTLSILGGFFYCKAHGPDVSHLGWLPLTCFVIYILGFSLGFGPIPWLMMGEILPAKIRGPAASVVTAFNWFCTFVVTKTFQDLTGAMGAHGAFWLFGAICFVGLFFVIIYVPETQGKTLEDIERKMMGRVRRMSSVANIKPLSFNM</sequence>
<organism>
    <name type="scientific">Drosophila simulans</name>
    <name type="common">Fruit fly</name>
    <dbReference type="NCBI Taxonomy" id="7240"/>
    <lineage>
        <taxon>Eukaryota</taxon>
        <taxon>Metazoa</taxon>
        <taxon>Ecdysozoa</taxon>
        <taxon>Arthropoda</taxon>
        <taxon>Hexapoda</taxon>
        <taxon>Insecta</taxon>
        <taxon>Pterygota</taxon>
        <taxon>Neoptera</taxon>
        <taxon>Endopterygota</taxon>
        <taxon>Diptera</taxon>
        <taxon>Brachycera</taxon>
        <taxon>Muscomorpha</taxon>
        <taxon>Ephydroidea</taxon>
        <taxon>Drosophilidae</taxon>
        <taxon>Drosophila</taxon>
        <taxon>Sophophora</taxon>
    </lineage>
</organism>